<organism>
    <name type="scientific">Archaeoglobus fulgidus (strain ATCC 49558 / DSM 4304 / JCM 9628 / NBRC 100126 / VC-16)</name>
    <dbReference type="NCBI Taxonomy" id="224325"/>
    <lineage>
        <taxon>Archaea</taxon>
        <taxon>Methanobacteriati</taxon>
        <taxon>Methanobacteriota</taxon>
        <taxon>Archaeoglobi</taxon>
        <taxon>Archaeoglobales</taxon>
        <taxon>Archaeoglobaceae</taxon>
        <taxon>Archaeoglobus</taxon>
    </lineage>
</organism>
<feature type="chain" id="PRO_0000153838" description="Small ribosomal subunit protein eS19">
    <location>
        <begin position="1"/>
        <end position="147"/>
    </location>
</feature>
<dbReference type="EMBL" id="AE000782">
    <property type="protein sequence ID" value="AAB89186.1"/>
    <property type="molecule type" value="Genomic_DNA"/>
</dbReference>
<dbReference type="PIR" id="D69508">
    <property type="entry name" value="D69508"/>
</dbReference>
<dbReference type="RefSeq" id="WP_010879561.1">
    <property type="nucleotide sequence ID" value="NC_000917.1"/>
</dbReference>
<dbReference type="SMR" id="O28210"/>
<dbReference type="STRING" id="224325.AF_2069"/>
<dbReference type="PaxDb" id="224325-AF_2069"/>
<dbReference type="EnsemblBacteria" id="AAB89186">
    <property type="protein sequence ID" value="AAB89186"/>
    <property type="gene ID" value="AF_2069"/>
</dbReference>
<dbReference type="KEGG" id="afu:AF_2069"/>
<dbReference type="eggNOG" id="arCOG01344">
    <property type="taxonomic scope" value="Archaea"/>
</dbReference>
<dbReference type="HOGENOM" id="CLU_108559_1_0_2"/>
<dbReference type="OrthoDB" id="371836at2157"/>
<dbReference type="PhylomeDB" id="O28210"/>
<dbReference type="Proteomes" id="UP000002199">
    <property type="component" value="Chromosome"/>
</dbReference>
<dbReference type="GO" id="GO:0022627">
    <property type="term" value="C:cytosolic small ribosomal subunit"/>
    <property type="evidence" value="ECO:0007669"/>
    <property type="project" value="TreeGrafter"/>
</dbReference>
<dbReference type="GO" id="GO:0003723">
    <property type="term" value="F:RNA binding"/>
    <property type="evidence" value="ECO:0007669"/>
    <property type="project" value="TreeGrafter"/>
</dbReference>
<dbReference type="GO" id="GO:0003735">
    <property type="term" value="F:structural constituent of ribosome"/>
    <property type="evidence" value="ECO:0007669"/>
    <property type="project" value="InterPro"/>
</dbReference>
<dbReference type="GO" id="GO:0000028">
    <property type="term" value="P:ribosomal small subunit assembly"/>
    <property type="evidence" value="ECO:0007669"/>
    <property type="project" value="TreeGrafter"/>
</dbReference>
<dbReference type="GO" id="GO:0006412">
    <property type="term" value="P:translation"/>
    <property type="evidence" value="ECO:0007669"/>
    <property type="project" value="UniProtKB-UniRule"/>
</dbReference>
<dbReference type="FunFam" id="1.10.10.10:FF:000449">
    <property type="entry name" value="30S ribosomal protein S19e"/>
    <property type="match status" value="1"/>
</dbReference>
<dbReference type="Gene3D" id="1.10.10.10">
    <property type="entry name" value="Winged helix-like DNA-binding domain superfamily/Winged helix DNA-binding domain"/>
    <property type="match status" value="1"/>
</dbReference>
<dbReference type="HAMAP" id="MF_01474">
    <property type="entry name" value="Ribosomal_eS19"/>
    <property type="match status" value="1"/>
</dbReference>
<dbReference type="InterPro" id="IPR001266">
    <property type="entry name" value="Ribosomal_eS19"/>
</dbReference>
<dbReference type="InterPro" id="IPR027548">
    <property type="entry name" value="Ribosomal_eS19_archaeal"/>
</dbReference>
<dbReference type="InterPro" id="IPR018277">
    <property type="entry name" value="Ribosomal_eS19_CS"/>
</dbReference>
<dbReference type="InterPro" id="IPR036388">
    <property type="entry name" value="WH-like_DNA-bd_sf"/>
</dbReference>
<dbReference type="InterPro" id="IPR036390">
    <property type="entry name" value="WH_DNA-bd_sf"/>
</dbReference>
<dbReference type="NCBIfam" id="NF006811">
    <property type="entry name" value="PRK09333.1"/>
    <property type="match status" value="1"/>
</dbReference>
<dbReference type="PANTHER" id="PTHR11710">
    <property type="entry name" value="40S RIBOSOMAL PROTEIN S19"/>
    <property type="match status" value="1"/>
</dbReference>
<dbReference type="PANTHER" id="PTHR11710:SF0">
    <property type="entry name" value="40S RIBOSOMAL PROTEIN S19"/>
    <property type="match status" value="1"/>
</dbReference>
<dbReference type="Pfam" id="PF01090">
    <property type="entry name" value="Ribosomal_S19e"/>
    <property type="match status" value="1"/>
</dbReference>
<dbReference type="SMART" id="SM01413">
    <property type="entry name" value="Ribosomal_S19e"/>
    <property type="match status" value="1"/>
</dbReference>
<dbReference type="SUPFAM" id="SSF46785">
    <property type="entry name" value="Winged helix' DNA-binding domain"/>
    <property type="match status" value="1"/>
</dbReference>
<dbReference type="PROSITE" id="PS00628">
    <property type="entry name" value="RIBOSOMAL_S19E"/>
    <property type="match status" value="1"/>
</dbReference>
<keyword id="KW-1185">Reference proteome</keyword>
<keyword id="KW-0687">Ribonucleoprotein</keyword>
<keyword id="KW-0689">Ribosomal protein</keyword>
<sequence>MATVYDVPADLLIKRVAERLKDMVAPPEWAKYVKTGVHKERSPEQDDWWYLRLASIFRRVYIDGPVGIERLRTFYGGRKRRGSKPPKFRKGSGAIVRNALHQLEQLGFVKKTREGRVVTPMGRSFLDKVATELKSELVSEIPALEKY</sequence>
<accession>O28210</accession>
<comment type="function">
    <text evidence="1">May be involved in maturation of the 30S ribosomal subunit.</text>
</comment>
<comment type="subunit">
    <text evidence="1">Part of the 30S ribosomal subunit.</text>
</comment>
<comment type="similarity">
    <text evidence="1">Belongs to the eukaryotic ribosomal protein eS19 family.</text>
</comment>
<gene>
    <name evidence="1" type="primary">rps19e</name>
    <name type="ordered locus">AF_2069</name>
</gene>
<name>RS19E_ARCFU</name>
<proteinExistence type="inferred from homology"/>
<evidence type="ECO:0000255" key="1">
    <source>
        <dbReference type="HAMAP-Rule" id="MF_01474"/>
    </source>
</evidence>
<evidence type="ECO:0000305" key="2"/>
<reference key="1">
    <citation type="journal article" date="1997" name="Nature">
        <title>The complete genome sequence of the hyperthermophilic, sulphate-reducing archaeon Archaeoglobus fulgidus.</title>
        <authorList>
            <person name="Klenk H.-P."/>
            <person name="Clayton R.A."/>
            <person name="Tomb J.-F."/>
            <person name="White O."/>
            <person name="Nelson K.E."/>
            <person name="Ketchum K.A."/>
            <person name="Dodson R.J."/>
            <person name="Gwinn M.L."/>
            <person name="Hickey E.K."/>
            <person name="Peterson J.D."/>
            <person name="Richardson D.L."/>
            <person name="Kerlavage A.R."/>
            <person name="Graham D.E."/>
            <person name="Kyrpides N.C."/>
            <person name="Fleischmann R.D."/>
            <person name="Quackenbush J."/>
            <person name="Lee N.H."/>
            <person name="Sutton G.G."/>
            <person name="Gill S.R."/>
            <person name="Kirkness E.F."/>
            <person name="Dougherty B.A."/>
            <person name="McKenney K."/>
            <person name="Adams M.D."/>
            <person name="Loftus B.J."/>
            <person name="Peterson S.N."/>
            <person name="Reich C.I."/>
            <person name="McNeil L.K."/>
            <person name="Badger J.H."/>
            <person name="Glodek A."/>
            <person name="Zhou L."/>
            <person name="Overbeek R."/>
            <person name="Gocayne J.D."/>
            <person name="Weidman J.F."/>
            <person name="McDonald L.A."/>
            <person name="Utterback T.R."/>
            <person name="Cotton M.D."/>
            <person name="Spriggs T."/>
            <person name="Artiach P."/>
            <person name="Kaine B.P."/>
            <person name="Sykes S.M."/>
            <person name="Sadow P.W."/>
            <person name="D'Andrea K.P."/>
            <person name="Bowman C."/>
            <person name="Fujii C."/>
            <person name="Garland S.A."/>
            <person name="Mason T.M."/>
            <person name="Olsen G.J."/>
            <person name="Fraser C.M."/>
            <person name="Smith H.O."/>
            <person name="Woese C.R."/>
            <person name="Venter J.C."/>
        </authorList>
    </citation>
    <scope>NUCLEOTIDE SEQUENCE [LARGE SCALE GENOMIC DNA]</scope>
    <source>
        <strain>ATCC 49558 / DSM 4304 / JCM 9628 / NBRC 100126 / VC-16</strain>
    </source>
</reference>
<protein>
    <recommendedName>
        <fullName evidence="1">Small ribosomal subunit protein eS19</fullName>
    </recommendedName>
    <alternativeName>
        <fullName evidence="2">30S ribosomal protein S19e</fullName>
    </alternativeName>
</protein>